<name>YBEY_ACISJ</name>
<proteinExistence type="inferred from homology"/>
<keyword id="KW-0963">Cytoplasm</keyword>
<keyword id="KW-0255">Endonuclease</keyword>
<keyword id="KW-0378">Hydrolase</keyword>
<keyword id="KW-0479">Metal-binding</keyword>
<keyword id="KW-0540">Nuclease</keyword>
<keyword id="KW-0690">Ribosome biogenesis</keyword>
<keyword id="KW-0698">rRNA processing</keyword>
<keyword id="KW-0862">Zinc</keyword>
<organism>
    <name type="scientific">Acidovorax sp. (strain JS42)</name>
    <dbReference type="NCBI Taxonomy" id="232721"/>
    <lineage>
        <taxon>Bacteria</taxon>
        <taxon>Pseudomonadati</taxon>
        <taxon>Pseudomonadota</taxon>
        <taxon>Betaproteobacteria</taxon>
        <taxon>Burkholderiales</taxon>
        <taxon>Comamonadaceae</taxon>
        <taxon>Acidovorax</taxon>
    </lineage>
</organism>
<evidence type="ECO:0000255" key="1">
    <source>
        <dbReference type="HAMAP-Rule" id="MF_00009"/>
    </source>
</evidence>
<accession>A1WC38</accession>
<protein>
    <recommendedName>
        <fullName evidence="1">Endoribonuclease YbeY</fullName>
        <ecNumber evidence="1">3.1.-.-</ecNumber>
    </recommendedName>
</protein>
<reference key="1">
    <citation type="submission" date="2006-12" db="EMBL/GenBank/DDBJ databases">
        <title>Complete sequence of chromosome 1 of Acidovorax sp. JS42.</title>
        <authorList>
            <person name="Copeland A."/>
            <person name="Lucas S."/>
            <person name="Lapidus A."/>
            <person name="Barry K."/>
            <person name="Detter J.C."/>
            <person name="Glavina del Rio T."/>
            <person name="Dalin E."/>
            <person name="Tice H."/>
            <person name="Pitluck S."/>
            <person name="Chertkov O."/>
            <person name="Brettin T."/>
            <person name="Bruce D."/>
            <person name="Han C."/>
            <person name="Tapia R."/>
            <person name="Gilna P."/>
            <person name="Schmutz J."/>
            <person name="Larimer F."/>
            <person name="Land M."/>
            <person name="Hauser L."/>
            <person name="Kyrpides N."/>
            <person name="Kim E."/>
            <person name="Stahl D."/>
            <person name="Richardson P."/>
        </authorList>
    </citation>
    <scope>NUCLEOTIDE SEQUENCE [LARGE SCALE GENOMIC DNA]</scope>
    <source>
        <strain>JS42</strain>
    </source>
</reference>
<comment type="function">
    <text evidence="1">Single strand-specific metallo-endoribonuclease involved in late-stage 70S ribosome quality control and in maturation of the 3' terminus of the 16S rRNA.</text>
</comment>
<comment type="cofactor">
    <cofactor evidence="1">
        <name>Zn(2+)</name>
        <dbReference type="ChEBI" id="CHEBI:29105"/>
    </cofactor>
    <text evidence="1">Binds 1 zinc ion.</text>
</comment>
<comment type="subcellular location">
    <subcellularLocation>
        <location evidence="1">Cytoplasm</location>
    </subcellularLocation>
</comment>
<comment type="similarity">
    <text evidence="1">Belongs to the endoribonuclease YbeY family.</text>
</comment>
<feature type="chain" id="PRO_0000284151" description="Endoribonuclease YbeY">
    <location>
        <begin position="1"/>
        <end position="152"/>
    </location>
</feature>
<feature type="binding site" evidence="1">
    <location>
        <position position="113"/>
    </location>
    <ligand>
        <name>Zn(2+)</name>
        <dbReference type="ChEBI" id="CHEBI:29105"/>
        <note>catalytic</note>
    </ligand>
</feature>
<feature type="binding site" evidence="1">
    <location>
        <position position="117"/>
    </location>
    <ligand>
        <name>Zn(2+)</name>
        <dbReference type="ChEBI" id="CHEBI:29105"/>
        <note>catalytic</note>
    </ligand>
</feature>
<feature type="binding site" evidence="1">
    <location>
        <position position="123"/>
    </location>
    <ligand>
        <name>Zn(2+)</name>
        <dbReference type="ChEBI" id="CHEBI:29105"/>
        <note>catalytic</note>
    </ligand>
</feature>
<sequence length="152" mass="17198">MALNQLSLSLQFARDAEATAHRATLPRHAVARWIRHALAVDAEITVRIVGAEEGQRLNREFRHKDYATNVLTFDYQQEPVAVADLVLCAPVVEREAREQNKTLEEHYAHLLVHGTLHAQGWDHETSEQDAQEMEAYETAILQELGFADPYAA</sequence>
<dbReference type="EC" id="3.1.-.-" evidence="1"/>
<dbReference type="EMBL" id="CP000539">
    <property type="protein sequence ID" value="ABM43813.1"/>
    <property type="molecule type" value="Genomic_DNA"/>
</dbReference>
<dbReference type="RefSeq" id="WP_011806796.1">
    <property type="nucleotide sequence ID" value="NZ_CP016278.1"/>
</dbReference>
<dbReference type="SMR" id="A1WC38"/>
<dbReference type="STRING" id="232721.Ajs_3702"/>
<dbReference type="GeneID" id="84682995"/>
<dbReference type="KEGG" id="ajs:Ajs_3702"/>
<dbReference type="eggNOG" id="COG0319">
    <property type="taxonomic scope" value="Bacteria"/>
</dbReference>
<dbReference type="HOGENOM" id="CLU_106710_0_1_4"/>
<dbReference type="Proteomes" id="UP000000645">
    <property type="component" value="Chromosome"/>
</dbReference>
<dbReference type="GO" id="GO:0005737">
    <property type="term" value="C:cytoplasm"/>
    <property type="evidence" value="ECO:0007669"/>
    <property type="project" value="UniProtKB-SubCell"/>
</dbReference>
<dbReference type="GO" id="GO:0004222">
    <property type="term" value="F:metalloendopeptidase activity"/>
    <property type="evidence" value="ECO:0007669"/>
    <property type="project" value="InterPro"/>
</dbReference>
<dbReference type="GO" id="GO:0004521">
    <property type="term" value="F:RNA endonuclease activity"/>
    <property type="evidence" value="ECO:0007669"/>
    <property type="project" value="UniProtKB-UniRule"/>
</dbReference>
<dbReference type="GO" id="GO:0008270">
    <property type="term" value="F:zinc ion binding"/>
    <property type="evidence" value="ECO:0007669"/>
    <property type="project" value="UniProtKB-UniRule"/>
</dbReference>
<dbReference type="GO" id="GO:0006364">
    <property type="term" value="P:rRNA processing"/>
    <property type="evidence" value="ECO:0007669"/>
    <property type="project" value="UniProtKB-UniRule"/>
</dbReference>
<dbReference type="Gene3D" id="3.40.390.30">
    <property type="entry name" value="Metalloproteases ('zincins'), catalytic domain"/>
    <property type="match status" value="1"/>
</dbReference>
<dbReference type="HAMAP" id="MF_00009">
    <property type="entry name" value="Endoribonucl_YbeY"/>
    <property type="match status" value="1"/>
</dbReference>
<dbReference type="InterPro" id="IPR023091">
    <property type="entry name" value="MetalPrtase_cat_dom_sf_prd"/>
</dbReference>
<dbReference type="InterPro" id="IPR002036">
    <property type="entry name" value="YbeY"/>
</dbReference>
<dbReference type="InterPro" id="IPR020549">
    <property type="entry name" value="YbeY_CS"/>
</dbReference>
<dbReference type="NCBIfam" id="TIGR00043">
    <property type="entry name" value="rRNA maturation RNase YbeY"/>
    <property type="match status" value="1"/>
</dbReference>
<dbReference type="PANTHER" id="PTHR46986">
    <property type="entry name" value="ENDORIBONUCLEASE YBEY, CHLOROPLASTIC"/>
    <property type="match status" value="1"/>
</dbReference>
<dbReference type="PANTHER" id="PTHR46986:SF1">
    <property type="entry name" value="ENDORIBONUCLEASE YBEY, CHLOROPLASTIC"/>
    <property type="match status" value="1"/>
</dbReference>
<dbReference type="Pfam" id="PF02130">
    <property type="entry name" value="YbeY"/>
    <property type="match status" value="1"/>
</dbReference>
<dbReference type="SUPFAM" id="SSF55486">
    <property type="entry name" value="Metalloproteases ('zincins'), catalytic domain"/>
    <property type="match status" value="1"/>
</dbReference>
<dbReference type="PROSITE" id="PS01306">
    <property type="entry name" value="UPF0054"/>
    <property type="match status" value="1"/>
</dbReference>
<gene>
    <name evidence="1" type="primary">ybeY</name>
    <name type="ordered locus">Ajs_3702</name>
</gene>